<name>NIKB_STAAN</name>
<accession>Q7A5Q6</accession>
<proteinExistence type="inferred from homology"/>
<comment type="function">
    <text evidence="1">Part of the ABC transporter complex NikABCDE (Opp2) involved in nickel import. Probably responsible for the translocation of the substrate across the membrane.</text>
</comment>
<comment type="subunit">
    <text evidence="1">The complex is composed of two ATP-binding proteins (NikD and NikE), two transmembrane proteins (NikB and NikC) and a solute-binding protein (NikA).</text>
</comment>
<comment type="subcellular location">
    <subcellularLocation>
        <location evidence="3">Cell membrane</location>
        <topology evidence="2">Multi-pass membrane protein</topology>
    </subcellularLocation>
</comment>
<comment type="similarity">
    <text evidence="3">Belongs to the binding-protein-dependent transport system permease family. OppBC subfamily.</text>
</comment>
<protein>
    <recommendedName>
        <fullName evidence="1">Nickel import system permease protein NikB</fullName>
    </recommendedName>
</protein>
<dbReference type="EMBL" id="BA000018">
    <property type="protein sequence ID" value="BAB42474.1"/>
    <property type="molecule type" value="Genomic_DNA"/>
</dbReference>
<dbReference type="PIR" id="F89914">
    <property type="entry name" value="F89914"/>
</dbReference>
<dbReference type="RefSeq" id="WP_000469951.1">
    <property type="nucleotide sequence ID" value="NC_002745.2"/>
</dbReference>
<dbReference type="SMR" id="Q7A5Q6"/>
<dbReference type="EnsemblBacteria" id="BAB42474">
    <property type="protein sequence ID" value="BAB42474"/>
    <property type="gene ID" value="BAB42474"/>
</dbReference>
<dbReference type="KEGG" id="sau:SA1214"/>
<dbReference type="HOGENOM" id="CLU_036879_0_2_9"/>
<dbReference type="GO" id="GO:0005886">
    <property type="term" value="C:plasma membrane"/>
    <property type="evidence" value="ECO:0007669"/>
    <property type="project" value="UniProtKB-SubCell"/>
</dbReference>
<dbReference type="GO" id="GO:0015099">
    <property type="term" value="F:nickel cation transmembrane transporter activity"/>
    <property type="evidence" value="ECO:0007669"/>
    <property type="project" value="InterPro"/>
</dbReference>
<dbReference type="CDD" id="cd06261">
    <property type="entry name" value="TM_PBP2"/>
    <property type="match status" value="1"/>
</dbReference>
<dbReference type="Gene3D" id="1.10.3720.10">
    <property type="entry name" value="MetI-like"/>
    <property type="match status" value="1"/>
</dbReference>
<dbReference type="InterPro" id="IPR045621">
    <property type="entry name" value="BPD_transp_1_N"/>
</dbReference>
<dbReference type="InterPro" id="IPR000515">
    <property type="entry name" value="MetI-like"/>
</dbReference>
<dbReference type="InterPro" id="IPR035906">
    <property type="entry name" value="MetI-like_sf"/>
</dbReference>
<dbReference type="InterPro" id="IPR050045">
    <property type="entry name" value="Opp2B"/>
</dbReference>
<dbReference type="NCBIfam" id="NF045470">
    <property type="entry name" value="Opp2B"/>
    <property type="match status" value="1"/>
</dbReference>
<dbReference type="PANTHER" id="PTHR43163">
    <property type="entry name" value="DIPEPTIDE TRANSPORT SYSTEM PERMEASE PROTEIN DPPB-RELATED"/>
    <property type="match status" value="1"/>
</dbReference>
<dbReference type="PANTHER" id="PTHR43163:SF6">
    <property type="entry name" value="DIPEPTIDE TRANSPORT SYSTEM PERMEASE PROTEIN DPPB-RELATED"/>
    <property type="match status" value="1"/>
</dbReference>
<dbReference type="Pfam" id="PF00528">
    <property type="entry name" value="BPD_transp_1"/>
    <property type="match status" value="1"/>
</dbReference>
<dbReference type="Pfam" id="PF19300">
    <property type="entry name" value="BPD_transp_1_N"/>
    <property type="match status" value="1"/>
</dbReference>
<dbReference type="SUPFAM" id="SSF161098">
    <property type="entry name" value="MetI-like"/>
    <property type="match status" value="1"/>
</dbReference>
<dbReference type="PROSITE" id="PS50928">
    <property type="entry name" value="ABC_TM1"/>
    <property type="match status" value="1"/>
</dbReference>
<feature type="chain" id="PRO_0000276780" description="Nickel import system permease protein NikB">
    <location>
        <begin position="1"/>
        <end position="328"/>
    </location>
</feature>
<feature type="transmembrane region" description="Helical" evidence="2">
    <location>
        <begin position="11"/>
        <end position="31"/>
    </location>
</feature>
<feature type="transmembrane region" description="Helical" evidence="2">
    <location>
        <begin position="104"/>
        <end position="124"/>
    </location>
</feature>
<feature type="transmembrane region" description="Helical" evidence="2">
    <location>
        <begin position="139"/>
        <end position="159"/>
    </location>
</feature>
<feature type="transmembrane region" description="Helical" evidence="2">
    <location>
        <begin position="170"/>
        <end position="190"/>
    </location>
</feature>
<feature type="transmembrane region" description="Helical" evidence="2">
    <location>
        <begin position="229"/>
        <end position="249"/>
    </location>
</feature>
<feature type="transmembrane region" description="Helical" evidence="2">
    <location>
        <begin position="279"/>
        <end position="299"/>
    </location>
</feature>
<feature type="domain" description="ABC transmembrane type-1" evidence="2">
    <location>
        <begin position="100"/>
        <end position="297"/>
    </location>
</feature>
<reference key="1">
    <citation type="journal article" date="2001" name="Lancet">
        <title>Whole genome sequencing of meticillin-resistant Staphylococcus aureus.</title>
        <authorList>
            <person name="Kuroda M."/>
            <person name="Ohta T."/>
            <person name="Uchiyama I."/>
            <person name="Baba T."/>
            <person name="Yuzawa H."/>
            <person name="Kobayashi I."/>
            <person name="Cui L."/>
            <person name="Oguchi A."/>
            <person name="Aoki K."/>
            <person name="Nagai Y."/>
            <person name="Lian J.-Q."/>
            <person name="Ito T."/>
            <person name="Kanamori M."/>
            <person name="Matsumaru H."/>
            <person name="Maruyama A."/>
            <person name="Murakami H."/>
            <person name="Hosoyama A."/>
            <person name="Mizutani-Ui Y."/>
            <person name="Takahashi N.K."/>
            <person name="Sawano T."/>
            <person name="Inoue R."/>
            <person name="Kaito C."/>
            <person name="Sekimizu K."/>
            <person name="Hirakawa H."/>
            <person name="Kuhara S."/>
            <person name="Goto S."/>
            <person name="Yabuzaki J."/>
            <person name="Kanehisa M."/>
            <person name="Yamashita A."/>
            <person name="Oshima K."/>
            <person name="Furuya K."/>
            <person name="Yoshino C."/>
            <person name="Shiba T."/>
            <person name="Hattori M."/>
            <person name="Ogasawara N."/>
            <person name="Hayashi H."/>
            <person name="Hiramatsu K."/>
        </authorList>
    </citation>
    <scope>NUCLEOTIDE SEQUENCE [LARGE SCALE GENOMIC DNA]</scope>
    <source>
        <strain>N315</strain>
    </source>
</reference>
<gene>
    <name evidence="1" type="primary">nikB</name>
    <name type="synonym">oppB2</name>
    <name type="ordered locus">SA1214</name>
</gene>
<organism>
    <name type="scientific">Staphylococcus aureus (strain N315)</name>
    <dbReference type="NCBI Taxonomy" id="158879"/>
    <lineage>
        <taxon>Bacteria</taxon>
        <taxon>Bacillati</taxon>
        <taxon>Bacillota</taxon>
        <taxon>Bacilli</taxon>
        <taxon>Bacillales</taxon>
        <taxon>Staphylococcaceae</taxon>
        <taxon>Staphylococcus</taxon>
    </lineage>
</organism>
<keyword id="KW-1003">Cell membrane</keyword>
<keyword id="KW-0406">Ion transport</keyword>
<keyword id="KW-0472">Membrane</keyword>
<keyword id="KW-0533">Nickel</keyword>
<keyword id="KW-0921">Nickel transport</keyword>
<keyword id="KW-0812">Transmembrane</keyword>
<keyword id="KW-1133">Transmembrane helix</keyword>
<keyword id="KW-0813">Transport</keyword>
<sequence length="328" mass="36815">MFIIKSMLYRLMQMIVVLFVISTLTFILMKLSPGNPVDKILHLDVAQVSTEQINATKDKLGLNDSLLVQWWHWMNHLLHFNLGKSFESKEPVTQILFNYAPITLLISFSTLVVSLCISIPLGIIAAKRFHKWTDKVIRVISTLSISLPAFFIGIILLFIVTNLMNIDSVILSQFILPVITLSLGMCAYIIRLVRSNLLMLLQSNIVQASRLRGMNERYILIHDLLKPTILPIIPLLGISLGSLIGGTVVIENLFDIPGIGYLLMDSIKSRDYPVIQGCVLFIGFFVVIINTIADLLTLLLDPKQRLQLGNPKNKTNTPLISESSDRHA</sequence>
<evidence type="ECO:0000250" key="1">
    <source>
        <dbReference type="UniProtKB" id="Q2FYQ5"/>
    </source>
</evidence>
<evidence type="ECO:0000255" key="2">
    <source>
        <dbReference type="PROSITE-ProRule" id="PRU00441"/>
    </source>
</evidence>
<evidence type="ECO:0000305" key="3"/>